<reference key="1">
    <citation type="journal article" date="2008" name="J. Bacteriol.">
        <title>The pangenome structure of Escherichia coli: comparative genomic analysis of E. coli commensal and pathogenic isolates.</title>
        <authorList>
            <person name="Rasko D.A."/>
            <person name="Rosovitz M.J."/>
            <person name="Myers G.S.A."/>
            <person name="Mongodin E.F."/>
            <person name="Fricke W.F."/>
            <person name="Gajer P."/>
            <person name="Crabtree J."/>
            <person name="Sebaihia M."/>
            <person name="Thomson N.R."/>
            <person name="Chaudhuri R."/>
            <person name="Henderson I.R."/>
            <person name="Sperandio V."/>
            <person name="Ravel J."/>
        </authorList>
    </citation>
    <scope>NUCLEOTIDE SEQUENCE [LARGE SCALE GENOMIC DNA]</scope>
    <source>
        <strain>HS</strain>
    </source>
</reference>
<proteinExistence type="inferred from homology"/>
<name>RSD_ECOHS</name>
<keyword id="KW-0963">Cytoplasm</keyword>
<keyword id="KW-0804">Transcription</keyword>
<keyword id="KW-0805">Transcription regulation</keyword>
<dbReference type="EMBL" id="CP000802">
    <property type="protein sequence ID" value="ABV08399.1"/>
    <property type="molecule type" value="Genomic_DNA"/>
</dbReference>
<dbReference type="RefSeq" id="WP_000934302.1">
    <property type="nucleotide sequence ID" value="NC_009800.1"/>
</dbReference>
<dbReference type="SMR" id="A8A795"/>
<dbReference type="GeneID" id="75205513"/>
<dbReference type="KEGG" id="ecx:EcHS_A4229"/>
<dbReference type="HOGENOM" id="CLU_142729_0_0_6"/>
<dbReference type="GO" id="GO:0005737">
    <property type="term" value="C:cytoplasm"/>
    <property type="evidence" value="ECO:0007669"/>
    <property type="project" value="UniProtKB-SubCell"/>
</dbReference>
<dbReference type="GO" id="GO:0006355">
    <property type="term" value="P:regulation of DNA-templated transcription"/>
    <property type="evidence" value="ECO:0007669"/>
    <property type="project" value="InterPro"/>
</dbReference>
<dbReference type="FunFam" id="1.20.120.1370:FF:000001">
    <property type="entry name" value="Regulator of sigma D"/>
    <property type="match status" value="1"/>
</dbReference>
<dbReference type="Gene3D" id="1.20.120.1370">
    <property type="entry name" value="Regulator of RNA polymerase sigma(70) subunit, domain 4"/>
    <property type="match status" value="1"/>
</dbReference>
<dbReference type="HAMAP" id="MF_01181">
    <property type="entry name" value="Rsd"/>
    <property type="match status" value="1"/>
</dbReference>
<dbReference type="InterPro" id="IPR038309">
    <property type="entry name" value="Rsd/AlgQ_sf"/>
</dbReference>
<dbReference type="InterPro" id="IPR023785">
    <property type="entry name" value="Sigma70_reg_Rsd"/>
</dbReference>
<dbReference type="InterPro" id="IPR007448">
    <property type="entry name" value="Sigma70_reg_Rsd_AlgQ"/>
</dbReference>
<dbReference type="NCBIfam" id="NF008723">
    <property type="entry name" value="PRK11718.1"/>
    <property type="match status" value="1"/>
</dbReference>
<dbReference type="Pfam" id="PF04353">
    <property type="entry name" value="Rsd_AlgQ"/>
    <property type="match status" value="1"/>
</dbReference>
<dbReference type="PIRSF" id="PIRSF016548">
    <property type="entry name" value="Rsd_AlgQ"/>
    <property type="match status" value="1"/>
</dbReference>
<gene>
    <name evidence="1" type="primary">rsd</name>
    <name type="ordered locus">EcHS_A4229</name>
</gene>
<feature type="chain" id="PRO_1000065794" description="Regulator of sigma D">
    <location>
        <begin position="1"/>
        <end position="158"/>
    </location>
</feature>
<organism>
    <name type="scientific">Escherichia coli O9:H4 (strain HS)</name>
    <dbReference type="NCBI Taxonomy" id="331112"/>
    <lineage>
        <taxon>Bacteria</taxon>
        <taxon>Pseudomonadati</taxon>
        <taxon>Pseudomonadota</taxon>
        <taxon>Gammaproteobacteria</taxon>
        <taxon>Enterobacterales</taxon>
        <taxon>Enterobacteriaceae</taxon>
        <taxon>Escherichia</taxon>
    </lineage>
</organism>
<protein>
    <recommendedName>
        <fullName evidence="1">Regulator of sigma D</fullName>
    </recommendedName>
</protein>
<sequence length="158" mass="18243">MLNQLDNLTERVRGSNKLVDRWLHVRKHLLVAYYNLVGIKPGKESYMRLNEKALDDFCQSLVDYLSAGHFSIYERILHKLEGNGQLARAAKIWPQLEANTQQIMDYYDSSLETAIDHDNYLEFQQVLSDIGEALEARFVLEDKLILLVLDAARVKHPA</sequence>
<accession>A8A795</accession>
<comment type="function">
    <text evidence="1">Binds RpoD and negatively regulates RpoD-mediated transcription activation by preventing the interaction between the primary sigma factor RpoD with the catalytic core of the RNA polymerase and with promoter DNA. May be involved in replacement of the RNA polymerase sigma subunit from RpoD to RpoS during the transition from exponential growth to the stationary phase.</text>
</comment>
<comment type="subunit">
    <text evidence="1">Interacts with RpoD.</text>
</comment>
<comment type="subcellular location">
    <subcellularLocation>
        <location evidence="1">Cytoplasm</location>
    </subcellularLocation>
</comment>
<comment type="similarity">
    <text evidence="1">Belongs to the Rsd/AlgQ family.</text>
</comment>
<evidence type="ECO:0000255" key="1">
    <source>
        <dbReference type="HAMAP-Rule" id="MF_01181"/>
    </source>
</evidence>